<protein>
    <recommendedName>
        <fullName evidence="1">Bifunctional protein FolD</fullName>
    </recommendedName>
    <domain>
        <recommendedName>
            <fullName evidence="1">Methylenetetrahydrofolate dehydrogenase</fullName>
            <ecNumber evidence="1">1.5.1.5</ecNumber>
        </recommendedName>
    </domain>
    <domain>
        <recommendedName>
            <fullName evidence="1">Methenyltetrahydrofolate cyclohydrolase</fullName>
            <ecNumber evidence="1">3.5.4.9</ecNumber>
        </recommendedName>
    </domain>
</protein>
<sequence>MTAVPPSCQILDGKALAQKMQGELQRDIAQLVAQGHRSPGLAVLMVGDNPASAVYVRNKEKACEKLGMVSFGKHFSADTDQETLTAAIASLNEDERVDGILVQLPLPDHLDAVKLLHTIDPSKDADGLHPVNLGHLVRGEEGLRSCTPAGVMALLAEYNLDLTGKNAVVLGRSILVGKPLALMLLEKNCTVTIAHSRTQNLADITRQADILVAAIGKPEFVTADMVKPGAIVVDVGINRLDLGEGKSTLVGDVDFAGVAPVASYLTPVPGGIGPMTVTLLLANTVASYRQRLGI</sequence>
<feature type="chain" id="PRO_0000268538" description="Bifunctional protein FolD">
    <location>
        <begin position="1"/>
        <end position="294"/>
    </location>
</feature>
<feature type="binding site" evidence="1">
    <location>
        <begin position="171"/>
        <end position="173"/>
    </location>
    <ligand>
        <name>NADP(+)</name>
        <dbReference type="ChEBI" id="CHEBI:58349"/>
    </ligand>
</feature>
<feature type="binding site" evidence="1">
    <location>
        <position position="196"/>
    </location>
    <ligand>
        <name>NADP(+)</name>
        <dbReference type="ChEBI" id="CHEBI:58349"/>
    </ligand>
</feature>
<feature type="binding site" evidence="1">
    <location>
        <position position="237"/>
    </location>
    <ligand>
        <name>NADP(+)</name>
        <dbReference type="ChEBI" id="CHEBI:58349"/>
    </ligand>
</feature>
<reference key="1">
    <citation type="journal article" date="1996" name="DNA Res.">
        <title>Sequence analysis of the genome of the unicellular cyanobacterium Synechocystis sp. strain PCC6803. II. Sequence determination of the entire genome and assignment of potential protein-coding regions.</title>
        <authorList>
            <person name="Kaneko T."/>
            <person name="Sato S."/>
            <person name="Kotani H."/>
            <person name="Tanaka A."/>
            <person name="Asamizu E."/>
            <person name="Nakamura Y."/>
            <person name="Miyajima N."/>
            <person name="Hirosawa M."/>
            <person name="Sugiura M."/>
            <person name="Sasamoto S."/>
            <person name="Kimura T."/>
            <person name="Hosouchi T."/>
            <person name="Matsuno A."/>
            <person name="Muraki A."/>
            <person name="Nakazaki N."/>
            <person name="Naruo K."/>
            <person name="Okumura S."/>
            <person name="Shimpo S."/>
            <person name="Takeuchi C."/>
            <person name="Wada T."/>
            <person name="Watanabe A."/>
            <person name="Yamada M."/>
            <person name="Yasuda M."/>
            <person name="Tabata S."/>
        </authorList>
    </citation>
    <scope>NUCLEOTIDE SEQUENCE [LARGE SCALE GENOMIC DNA]</scope>
    <source>
        <strain>ATCC 27184 / PCC 6803 / Kazusa</strain>
    </source>
</reference>
<dbReference type="EC" id="1.5.1.5" evidence="1"/>
<dbReference type="EC" id="3.5.4.9" evidence="1"/>
<dbReference type="EMBL" id="BA000022">
    <property type="protein sequence ID" value="BAA10139.1"/>
    <property type="molecule type" value="Genomic_DNA"/>
</dbReference>
<dbReference type="PIR" id="S76287">
    <property type="entry name" value="S76287"/>
</dbReference>
<dbReference type="SMR" id="Q55626"/>
<dbReference type="FunCoup" id="Q55626">
    <property type="interactions" value="367"/>
</dbReference>
<dbReference type="STRING" id="1148.gene:10499632"/>
<dbReference type="PaxDb" id="1148-1001512"/>
<dbReference type="EnsemblBacteria" id="BAA10139">
    <property type="protein sequence ID" value="BAA10139"/>
    <property type="gene ID" value="BAA10139"/>
</dbReference>
<dbReference type="KEGG" id="syn:sll0753"/>
<dbReference type="eggNOG" id="COG0190">
    <property type="taxonomic scope" value="Bacteria"/>
</dbReference>
<dbReference type="InParanoid" id="Q55626"/>
<dbReference type="PhylomeDB" id="Q55626"/>
<dbReference type="UniPathway" id="UPA00193"/>
<dbReference type="Proteomes" id="UP000001425">
    <property type="component" value="Chromosome"/>
</dbReference>
<dbReference type="GO" id="GO:0005829">
    <property type="term" value="C:cytosol"/>
    <property type="evidence" value="ECO:0000318"/>
    <property type="project" value="GO_Central"/>
</dbReference>
<dbReference type="GO" id="GO:0004477">
    <property type="term" value="F:methenyltetrahydrofolate cyclohydrolase activity"/>
    <property type="evidence" value="ECO:0000318"/>
    <property type="project" value="GO_Central"/>
</dbReference>
<dbReference type="GO" id="GO:0004488">
    <property type="term" value="F:methylenetetrahydrofolate dehydrogenase (NADP+) activity"/>
    <property type="evidence" value="ECO:0000318"/>
    <property type="project" value="GO_Central"/>
</dbReference>
<dbReference type="GO" id="GO:0000105">
    <property type="term" value="P:L-histidine biosynthetic process"/>
    <property type="evidence" value="ECO:0007669"/>
    <property type="project" value="UniProtKB-KW"/>
</dbReference>
<dbReference type="GO" id="GO:0009086">
    <property type="term" value="P:methionine biosynthetic process"/>
    <property type="evidence" value="ECO:0007669"/>
    <property type="project" value="UniProtKB-KW"/>
</dbReference>
<dbReference type="GO" id="GO:0006164">
    <property type="term" value="P:purine nucleotide biosynthetic process"/>
    <property type="evidence" value="ECO:0007669"/>
    <property type="project" value="UniProtKB-KW"/>
</dbReference>
<dbReference type="GO" id="GO:0035999">
    <property type="term" value="P:tetrahydrofolate interconversion"/>
    <property type="evidence" value="ECO:0000318"/>
    <property type="project" value="GO_Central"/>
</dbReference>
<dbReference type="CDD" id="cd01080">
    <property type="entry name" value="NAD_bind_m-THF_DH_Cyclohyd"/>
    <property type="match status" value="1"/>
</dbReference>
<dbReference type="FunFam" id="3.40.50.720:FF:000094">
    <property type="entry name" value="Bifunctional protein FolD"/>
    <property type="match status" value="1"/>
</dbReference>
<dbReference type="FunFam" id="3.40.50.10860:FF:000005">
    <property type="entry name" value="C-1-tetrahydrofolate synthase, cytoplasmic, putative"/>
    <property type="match status" value="1"/>
</dbReference>
<dbReference type="Gene3D" id="3.40.50.10860">
    <property type="entry name" value="Leucine Dehydrogenase, chain A, domain 1"/>
    <property type="match status" value="1"/>
</dbReference>
<dbReference type="Gene3D" id="3.40.50.720">
    <property type="entry name" value="NAD(P)-binding Rossmann-like Domain"/>
    <property type="match status" value="1"/>
</dbReference>
<dbReference type="HAMAP" id="MF_01576">
    <property type="entry name" value="THF_DHG_CYH"/>
    <property type="match status" value="1"/>
</dbReference>
<dbReference type="InterPro" id="IPR046346">
    <property type="entry name" value="Aminoacid_DH-like_N_sf"/>
</dbReference>
<dbReference type="InterPro" id="IPR036291">
    <property type="entry name" value="NAD(P)-bd_dom_sf"/>
</dbReference>
<dbReference type="InterPro" id="IPR000672">
    <property type="entry name" value="THF_DH/CycHdrlase"/>
</dbReference>
<dbReference type="InterPro" id="IPR020630">
    <property type="entry name" value="THF_DH/CycHdrlase_cat_dom"/>
</dbReference>
<dbReference type="InterPro" id="IPR020867">
    <property type="entry name" value="THF_DH/CycHdrlase_CS"/>
</dbReference>
<dbReference type="InterPro" id="IPR020631">
    <property type="entry name" value="THF_DH/CycHdrlase_NAD-bd_dom"/>
</dbReference>
<dbReference type="NCBIfam" id="NF008058">
    <property type="entry name" value="PRK10792.1"/>
    <property type="match status" value="1"/>
</dbReference>
<dbReference type="NCBIfam" id="NF010783">
    <property type="entry name" value="PRK14186.1"/>
    <property type="match status" value="1"/>
</dbReference>
<dbReference type="PANTHER" id="PTHR48099:SF5">
    <property type="entry name" value="C-1-TETRAHYDROFOLATE SYNTHASE, CYTOPLASMIC"/>
    <property type="match status" value="1"/>
</dbReference>
<dbReference type="PANTHER" id="PTHR48099">
    <property type="entry name" value="C-1-TETRAHYDROFOLATE SYNTHASE, CYTOPLASMIC-RELATED"/>
    <property type="match status" value="1"/>
</dbReference>
<dbReference type="Pfam" id="PF00763">
    <property type="entry name" value="THF_DHG_CYH"/>
    <property type="match status" value="1"/>
</dbReference>
<dbReference type="Pfam" id="PF02882">
    <property type="entry name" value="THF_DHG_CYH_C"/>
    <property type="match status" value="1"/>
</dbReference>
<dbReference type="PRINTS" id="PR00085">
    <property type="entry name" value="THFDHDRGNASE"/>
</dbReference>
<dbReference type="SUPFAM" id="SSF53223">
    <property type="entry name" value="Aminoacid dehydrogenase-like, N-terminal domain"/>
    <property type="match status" value="1"/>
</dbReference>
<dbReference type="SUPFAM" id="SSF51735">
    <property type="entry name" value="NAD(P)-binding Rossmann-fold domains"/>
    <property type="match status" value="1"/>
</dbReference>
<dbReference type="PROSITE" id="PS00767">
    <property type="entry name" value="THF_DHG_CYH_2"/>
    <property type="match status" value="1"/>
</dbReference>
<evidence type="ECO:0000255" key="1">
    <source>
        <dbReference type="HAMAP-Rule" id="MF_01576"/>
    </source>
</evidence>
<accession>Q55626</accession>
<comment type="function">
    <text evidence="1">Catalyzes the oxidation of 5,10-methylenetetrahydrofolate to 5,10-methenyltetrahydrofolate and then the hydrolysis of 5,10-methenyltetrahydrofolate to 10-formyltetrahydrofolate.</text>
</comment>
<comment type="catalytic activity">
    <reaction evidence="1">
        <text>(6R)-5,10-methylene-5,6,7,8-tetrahydrofolate + NADP(+) = (6R)-5,10-methenyltetrahydrofolate + NADPH</text>
        <dbReference type="Rhea" id="RHEA:22812"/>
        <dbReference type="ChEBI" id="CHEBI:15636"/>
        <dbReference type="ChEBI" id="CHEBI:57455"/>
        <dbReference type="ChEBI" id="CHEBI:57783"/>
        <dbReference type="ChEBI" id="CHEBI:58349"/>
        <dbReference type="EC" id="1.5.1.5"/>
    </reaction>
</comment>
<comment type="catalytic activity">
    <reaction evidence="1">
        <text>(6R)-5,10-methenyltetrahydrofolate + H2O = (6R)-10-formyltetrahydrofolate + H(+)</text>
        <dbReference type="Rhea" id="RHEA:23700"/>
        <dbReference type="ChEBI" id="CHEBI:15377"/>
        <dbReference type="ChEBI" id="CHEBI:15378"/>
        <dbReference type="ChEBI" id="CHEBI:57455"/>
        <dbReference type="ChEBI" id="CHEBI:195366"/>
        <dbReference type="EC" id="3.5.4.9"/>
    </reaction>
</comment>
<comment type="pathway">
    <text evidence="1">One-carbon metabolism; tetrahydrofolate interconversion.</text>
</comment>
<comment type="subunit">
    <text evidence="1">Homodimer.</text>
</comment>
<comment type="similarity">
    <text evidence="1">Belongs to the tetrahydrofolate dehydrogenase/cyclohydrolase family.</text>
</comment>
<gene>
    <name evidence="1" type="primary">folD</name>
    <name type="ordered locus">sll0753</name>
</gene>
<organism>
    <name type="scientific">Synechocystis sp. (strain ATCC 27184 / PCC 6803 / Kazusa)</name>
    <dbReference type="NCBI Taxonomy" id="1111708"/>
    <lineage>
        <taxon>Bacteria</taxon>
        <taxon>Bacillati</taxon>
        <taxon>Cyanobacteriota</taxon>
        <taxon>Cyanophyceae</taxon>
        <taxon>Synechococcales</taxon>
        <taxon>Merismopediaceae</taxon>
        <taxon>Synechocystis</taxon>
    </lineage>
</organism>
<proteinExistence type="inferred from homology"/>
<keyword id="KW-0028">Amino-acid biosynthesis</keyword>
<keyword id="KW-0368">Histidine biosynthesis</keyword>
<keyword id="KW-0378">Hydrolase</keyword>
<keyword id="KW-0486">Methionine biosynthesis</keyword>
<keyword id="KW-0511">Multifunctional enzyme</keyword>
<keyword id="KW-0521">NADP</keyword>
<keyword id="KW-0554">One-carbon metabolism</keyword>
<keyword id="KW-0560">Oxidoreductase</keyword>
<keyword id="KW-0658">Purine biosynthesis</keyword>
<keyword id="KW-1185">Reference proteome</keyword>
<name>FOLD_SYNY3</name>